<dbReference type="EC" id="6.3.2.1" evidence="1"/>
<dbReference type="EMBL" id="CP001598">
    <property type="protein sequence ID" value="ACQ46373.1"/>
    <property type="molecule type" value="Genomic_DNA"/>
</dbReference>
<dbReference type="RefSeq" id="WP_000706998.1">
    <property type="nucleotide sequence ID" value="NC_012659.1"/>
</dbReference>
<dbReference type="SMR" id="C3P5R0"/>
<dbReference type="GeneID" id="45021535"/>
<dbReference type="KEGG" id="bai:BAA_1630"/>
<dbReference type="HOGENOM" id="CLU_047148_0_0_9"/>
<dbReference type="UniPathway" id="UPA00028">
    <property type="reaction ID" value="UER00005"/>
</dbReference>
<dbReference type="GO" id="GO:0005829">
    <property type="term" value="C:cytosol"/>
    <property type="evidence" value="ECO:0007669"/>
    <property type="project" value="TreeGrafter"/>
</dbReference>
<dbReference type="GO" id="GO:0005524">
    <property type="term" value="F:ATP binding"/>
    <property type="evidence" value="ECO:0007669"/>
    <property type="project" value="UniProtKB-KW"/>
</dbReference>
<dbReference type="GO" id="GO:0004592">
    <property type="term" value="F:pantoate-beta-alanine ligase activity"/>
    <property type="evidence" value="ECO:0007669"/>
    <property type="project" value="UniProtKB-UniRule"/>
</dbReference>
<dbReference type="GO" id="GO:0015940">
    <property type="term" value="P:pantothenate biosynthetic process"/>
    <property type="evidence" value="ECO:0007669"/>
    <property type="project" value="UniProtKB-UniRule"/>
</dbReference>
<dbReference type="CDD" id="cd00560">
    <property type="entry name" value="PanC"/>
    <property type="match status" value="1"/>
</dbReference>
<dbReference type="FunFam" id="3.30.1300.10:FF:000001">
    <property type="entry name" value="Pantothenate synthetase"/>
    <property type="match status" value="1"/>
</dbReference>
<dbReference type="FunFam" id="3.40.50.620:FF:000013">
    <property type="entry name" value="Pantothenate synthetase"/>
    <property type="match status" value="1"/>
</dbReference>
<dbReference type="Gene3D" id="3.40.50.620">
    <property type="entry name" value="HUPs"/>
    <property type="match status" value="1"/>
</dbReference>
<dbReference type="Gene3D" id="3.30.1300.10">
    <property type="entry name" value="Pantoate-beta-alanine ligase, C-terminal domain"/>
    <property type="match status" value="1"/>
</dbReference>
<dbReference type="HAMAP" id="MF_00158">
    <property type="entry name" value="PanC"/>
    <property type="match status" value="1"/>
</dbReference>
<dbReference type="InterPro" id="IPR004821">
    <property type="entry name" value="Cyt_trans-like"/>
</dbReference>
<dbReference type="InterPro" id="IPR003721">
    <property type="entry name" value="Pantoate_ligase"/>
</dbReference>
<dbReference type="InterPro" id="IPR042176">
    <property type="entry name" value="Pantoate_ligase_C"/>
</dbReference>
<dbReference type="InterPro" id="IPR014729">
    <property type="entry name" value="Rossmann-like_a/b/a_fold"/>
</dbReference>
<dbReference type="NCBIfam" id="TIGR00125">
    <property type="entry name" value="cyt_tran_rel"/>
    <property type="match status" value="1"/>
</dbReference>
<dbReference type="NCBIfam" id="TIGR00018">
    <property type="entry name" value="panC"/>
    <property type="match status" value="1"/>
</dbReference>
<dbReference type="PANTHER" id="PTHR21299">
    <property type="entry name" value="CYTIDYLATE KINASE/PANTOATE-BETA-ALANINE LIGASE"/>
    <property type="match status" value="1"/>
</dbReference>
<dbReference type="PANTHER" id="PTHR21299:SF1">
    <property type="entry name" value="PANTOATE--BETA-ALANINE LIGASE"/>
    <property type="match status" value="1"/>
</dbReference>
<dbReference type="Pfam" id="PF02569">
    <property type="entry name" value="Pantoate_ligase"/>
    <property type="match status" value="1"/>
</dbReference>
<dbReference type="SUPFAM" id="SSF52374">
    <property type="entry name" value="Nucleotidylyl transferase"/>
    <property type="match status" value="1"/>
</dbReference>
<name>PANC_BACAA</name>
<proteinExistence type="inferred from homology"/>
<reference key="1">
    <citation type="submission" date="2009-04" db="EMBL/GenBank/DDBJ databases">
        <title>Genome sequence of Bacillus anthracis A0248.</title>
        <authorList>
            <person name="Dodson R.J."/>
            <person name="Munk A.C."/>
            <person name="Bruce D."/>
            <person name="Detter C."/>
            <person name="Tapia R."/>
            <person name="Sutton G."/>
            <person name="Sims D."/>
            <person name="Brettin T."/>
        </authorList>
    </citation>
    <scope>NUCLEOTIDE SEQUENCE [LARGE SCALE GENOMIC DNA]</scope>
    <source>
        <strain>A0248</strain>
    </source>
</reference>
<keyword id="KW-0067">ATP-binding</keyword>
<keyword id="KW-0963">Cytoplasm</keyword>
<keyword id="KW-0436">Ligase</keyword>
<keyword id="KW-0547">Nucleotide-binding</keyword>
<keyword id="KW-0566">Pantothenate biosynthesis</keyword>
<comment type="function">
    <text evidence="1">Catalyzes the condensation of pantoate with beta-alanine in an ATP-dependent reaction via a pantoyl-adenylate intermediate.</text>
</comment>
<comment type="catalytic activity">
    <reaction evidence="1">
        <text>(R)-pantoate + beta-alanine + ATP = (R)-pantothenate + AMP + diphosphate + H(+)</text>
        <dbReference type="Rhea" id="RHEA:10912"/>
        <dbReference type="ChEBI" id="CHEBI:15378"/>
        <dbReference type="ChEBI" id="CHEBI:15980"/>
        <dbReference type="ChEBI" id="CHEBI:29032"/>
        <dbReference type="ChEBI" id="CHEBI:30616"/>
        <dbReference type="ChEBI" id="CHEBI:33019"/>
        <dbReference type="ChEBI" id="CHEBI:57966"/>
        <dbReference type="ChEBI" id="CHEBI:456215"/>
        <dbReference type="EC" id="6.3.2.1"/>
    </reaction>
</comment>
<comment type="pathway">
    <text evidence="1">Cofactor biosynthesis; (R)-pantothenate biosynthesis; (R)-pantothenate from (R)-pantoate and beta-alanine: step 1/1.</text>
</comment>
<comment type="subunit">
    <text evidence="1">Homodimer.</text>
</comment>
<comment type="subcellular location">
    <subcellularLocation>
        <location evidence="1">Cytoplasm</location>
    </subcellularLocation>
</comment>
<comment type="miscellaneous">
    <text evidence="1">The reaction proceeds by a bi uni uni bi ping pong mechanism.</text>
</comment>
<comment type="similarity">
    <text evidence="1">Belongs to the pantothenate synthetase family.</text>
</comment>
<sequence>MKIVTTVQEMQHITKELRASGKSIGFVPTMGYLHEGHATLLRKAREENEIVVLSVFVNPLQFGPNEDLDRYPRDIDRDENVAKENGVDYLFYPSVEEMYPAEQTTTVEVVKRTDVLCGKQRPGHFAGVATVLMKLFNITLPTRAYFGMKDAQQVAVIEGFVADFNIPVIIVPVDIVREEDGLAKSSRNVYLSQKERKEAPHLYRSLCMAKERIEAGERNAEIITTLVKEYIETYTKGTVDYADLYAYPSLQVVDQIEGRIILAIAVKFENVRLIDNITLTVK</sequence>
<evidence type="ECO:0000255" key="1">
    <source>
        <dbReference type="HAMAP-Rule" id="MF_00158"/>
    </source>
</evidence>
<feature type="chain" id="PRO_1000123398" description="Pantothenate synthetase">
    <location>
        <begin position="1"/>
        <end position="282"/>
    </location>
</feature>
<feature type="active site" description="Proton donor" evidence="1">
    <location>
        <position position="37"/>
    </location>
</feature>
<feature type="binding site" evidence="1">
    <location>
        <begin position="30"/>
        <end position="37"/>
    </location>
    <ligand>
        <name>ATP</name>
        <dbReference type="ChEBI" id="CHEBI:30616"/>
    </ligand>
</feature>
<feature type="binding site" evidence="1">
    <location>
        <position position="61"/>
    </location>
    <ligand>
        <name>(R)-pantoate</name>
        <dbReference type="ChEBI" id="CHEBI:15980"/>
    </ligand>
</feature>
<feature type="binding site" evidence="1">
    <location>
        <position position="61"/>
    </location>
    <ligand>
        <name>beta-alanine</name>
        <dbReference type="ChEBI" id="CHEBI:57966"/>
    </ligand>
</feature>
<feature type="binding site" evidence="1">
    <location>
        <begin position="147"/>
        <end position="150"/>
    </location>
    <ligand>
        <name>ATP</name>
        <dbReference type="ChEBI" id="CHEBI:30616"/>
    </ligand>
</feature>
<feature type="binding site" evidence="1">
    <location>
        <position position="153"/>
    </location>
    <ligand>
        <name>(R)-pantoate</name>
        <dbReference type="ChEBI" id="CHEBI:15980"/>
    </ligand>
</feature>
<feature type="binding site" evidence="1">
    <location>
        <position position="176"/>
    </location>
    <ligand>
        <name>ATP</name>
        <dbReference type="ChEBI" id="CHEBI:30616"/>
    </ligand>
</feature>
<feature type="binding site" evidence="1">
    <location>
        <begin position="184"/>
        <end position="187"/>
    </location>
    <ligand>
        <name>ATP</name>
        <dbReference type="ChEBI" id="CHEBI:30616"/>
    </ligand>
</feature>
<protein>
    <recommendedName>
        <fullName evidence="1">Pantothenate synthetase</fullName>
        <shortName evidence="1">PS</shortName>
        <ecNumber evidence="1">6.3.2.1</ecNumber>
    </recommendedName>
    <alternativeName>
        <fullName evidence="1">Pantoate--beta-alanine ligase</fullName>
    </alternativeName>
    <alternativeName>
        <fullName evidence="1">Pantoate-activating enzyme</fullName>
    </alternativeName>
</protein>
<gene>
    <name evidence="1" type="primary">panC</name>
    <name type="ordered locus">BAA_1630</name>
</gene>
<organism>
    <name type="scientific">Bacillus anthracis (strain A0248)</name>
    <dbReference type="NCBI Taxonomy" id="592021"/>
    <lineage>
        <taxon>Bacteria</taxon>
        <taxon>Bacillati</taxon>
        <taxon>Bacillota</taxon>
        <taxon>Bacilli</taxon>
        <taxon>Bacillales</taxon>
        <taxon>Bacillaceae</taxon>
        <taxon>Bacillus</taxon>
        <taxon>Bacillus cereus group</taxon>
    </lineage>
</organism>
<accession>C3P5R0</accession>